<accession>B5R349</accession>
<evidence type="ECO:0000255" key="1">
    <source>
        <dbReference type="HAMAP-Rule" id="MF_00171"/>
    </source>
</evidence>
<name>TRUA_SALEP</name>
<gene>
    <name evidence="1" type="primary">truA</name>
    <name type="ordered locus">SEN2350</name>
</gene>
<protein>
    <recommendedName>
        <fullName evidence="1">tRNA pseudouridine synthase A</fullName>
        <ecNumber evidence="1">5.4.99.12</ecNumber>
    </recommendedName>
    <alternativeName>
        <fullName evidence="1">tRNA pseudouridine(38-40) synthase</fullName>
    </alternativeName>
    <alternativeName>
        <fullName evidence="1">tRNA pseudouridylate synthase I</fullName>
    </alternativeName>
    <alternativeName>
        <fullName evidence="1">tRNA-uridine isomerase I</fullName>
    </alternativeName>
</protein>
<sequence length="270" mass="30297">MSGQQSSPVYKIALGIEYDGSKYYGWQRQNEVRSVQEKLEKALSQVANEPINVFCAGRTDAGVHGTGQVVHFETTALRKDAAWTLGVNANLPGDIAVRWVKTVPDDFHARFSATARRYRYIIYNHRLRPAVLAKGVTHYYEPLDAERMHRAAQCLLGENDFTSFRAVQCQSRTPWRNVMHINVTRHGPYVVVDIKANAFVHHMVRNIVGSLLEVGAHNQPESWIAELLAARDRTLAAATAKAEGLYLVAVDYPDRFDLPKPPMGPLFLAD</sequence>
<reference key="1">
    <citation type="journal article" date="2008" name="Genome Res.">
        <title>Comparative genome analysis of Salmonella enteritidis PT4 and Salmonella gallinarum 287/91 provides insights into evolutionary and host adaptation pathways.</title>
        <authorList>
            <person name="Thomson N.R."/>
            <person name="Clayton D.J."/>
            <person name="Windhorst D."/>
            <person name="Vernikos G."/>
            <person name="Davidson S."/>
            <person name="Churcher C."/>
            <person name="Quail M.A."/>
            <person name="Stevens M."/>
            <person name="Jones M.A."/>
            <person name="Watson M."/>
            <person name="Barron A."/>
            <person name="Layton A."/>
            <person name="Pickard D."/>
            <person name="Kingsley R.A."/>
            <person name="Bignell A."/>
            <person name="Clark L."/>
            <person name="Harris B."/>
            <person name="Ormond D."/>
            <person name="Abdellah Z."/>
            <person name="Brooks K."/>
            <person name="Cherevach I."/>
            <person name="Chillingworth T."/>
            <person name="Woodward J."/>
            <person name="Norberczak H."/>
            <person name="Lord A."/>
            <person name="Arrowsmith C."/>
            <person name="Jagels K."/>
            <person name="Moule S."/>
            <person name="Mungall K."/>
            <person name="Saunders M."/>
            <person name="Whitehead S."/>
            <person name="Chabalgoity J.A."/>
            <person name="Maskell D."/>
            <person name="Humphreys T."/>
            <person name="Roberts M."/>
            <person name="Barrow P.A."/>
            <person name="Dougan G."/>
            <person name="Parkhill J."/>
        </authorList>
    </citation>
    <scope>NUCLEOTIDE SEQUENCE [LARGE SCALE GENOMIC DNA]</scope>
    <source>
        <strain>P125109</strain>
    </source>
</reference>
<dbReference type="EC" id="5.4.99.12" evidence="1"/>
<dbReference type="EMBL" id="AM933172">
    <property type="protein sequence ID" value="CAR33934.1"/>
    <property type="molecule type" value="Genomic_DNA"/>
</dbReference>
<dbReference type="RefSeq" id="WP_000016631.1">
    <property type="nucleotide sequence ID" value="NC_011294.1"/>
</dbReference>
<dbReference type="SMR" id="B5R349"/>
<dbReference type="KEGG" id="set:SEN2350"/>
<dbReference type="HOGENOM" id="CLU_014673_0_2_6"/>
<dbReference type="Proteomes" id="UP000000613">
    <property type="component" value="Chromosome"/>
</dbReference>
<dbReference type="GO" id="GO:0003723">
    <property type="term" value="F:RNA binding"/>
    <property type="evidence" value="ECO:0007669"/>
    <property type="project" value="InterPro"/>
</dbReference>
<dbReference type="GO" id="GO:0160147">
    <property type="term" value="F:tRNA pseudouridine(38-40) synthase activity"/>
    <property type="evidence" value="ECO:0007669"/>
    <property type="project" value="UniProtKB-EC"/>
</dbReference>
<dbReference type="GO" id="GO:0031119">
    <property type="term" value="P:tRNA pseudouridine synthesis"/>
    <property type="evidence" value="ECO:0007669"/>
    <property type="project" value="UniProtKB-UniRule"/>
</dbReference>
<dbReference type="CDD" id="cd02570">
    <property type="entry name" value="PseudoU_synth_EcTruA"/>
    <property type="match status" value="1"/>
</dbReference>
<dbReference type="FunFam" id="3.30.70.580:FF:000001">
    <property type="entry name" value="tRNA pseudouridine synthase A"/>
    <property type="match status" value="1"/>
</dbReference>
<dbReference type="FunFam" id="3.30.70.660:FF:000001">
    <property type="entry name" value="tRNA pseudouridine synthase A"/>
    <property type="match status" value="1"/>
</dbReference>
<dbReference type="Gene3D" id="3.30.70.660">
    <property type="entry name" value="Pseudouridine synthase I, catalytic domain, C-terminal subdomain"/>
    <property type="match status" value="1"/>
</dbReference>
<dbReference type="Gene3D" id="3.30.70.580">
    <property type="entry name" value="Pseudouridine synthase I, catalytic domain, N-terminal subdomain"/>
    <property type="match status" value="1"/>
</dbReference>
<dbReference type="HAMAP" id="MF_00171">
    <property type="entry name" value="TruA"/>
    <property type="match status" value="1"/>
</dbReference>
<dbReference type="InterPro" id="IPR020103">
    <property type="entry name" value="PsdUridine_synth_cat_dom_sf"/>
</dbReference>
<dbReference type="InterPro" id="IPR001406">
    <property type="entry name" value="PsdUridine_synth_TruA"/>
</dbReference>
<dbReference type="InterPro" id="IPR020097">
    <property type="entry name" value="PsdUridine_synth_TruA_a/b_dom"/>
</dbReference>
<dbReference type="InterPro" id="IPR020095">
    <property type="entry name" value="PsdUridine_synth_TruA_C"/>
</dbReference>
<dbReference type="InterPro" id="IPR020094">
    <property type="entry name" value="TruA/RsuA/RluB/E/F_N"/>
</dbReference>
<dbReference type="NCBIfam" id="TIGR00071">
    <property type="entry name" value="hisT_truA"/>
    <property type="match status" value="1"/>
</dbReference>
<dbReference type="PANTHER" id="PTHR11142">
    <property type="entry name" value="PSEUDOURIDYLATE SYNTHASE"/>
    <property type="match status" value="1"/>
</dbReference>
<dbReference type="PANTHER" id="PTHR11142:SF0">
    <property type="entry name" value="TRNA PSEUDOURIDINE SYNTHASE-LIKE 1"/>
    <property type="match status" value="1"/>
</dbReference>
<dbReference type="Pfam" id="PF01416">
    <property type="entry name" value="PseudoU_synth_1"/>
    <property type="match status" value="2"/>
</dbReference>
<dbReference type="PIRSF" id="PIRSF001430">
    <property type="entry name" value="tRNA_psdUrid_synth"/>
    <property type="match status" value="1"/>
</dbReference>
<dbReference type="SUPFAM" id="SSF55120">
    <property type="entry name" value="Pseudouridine synthase"/>
    <property type="match status" value="1"/>
</dbReference>
<feature type="chain" id="PRO_1000097779" description="tRNA pseudouridine synthase A">
    <location>
        <begin position="1"/>
        <end position="270"/>
    </location>
</feature>
<feature type="active site" description="Nucleophile" evidence="1">
    <location>
        <position position="60"/>
    </location>
</feature>
<feature type="binding site" evidence="1">
    <location>
        <position position="118"/>
    </location>
    <ligand>
        <name>substrate</name>
    </ligand>
</feature>
<comment type="function">
    <text evidence="1">Formation of pseudouridine at positions 38, 39 and 40 in the anticodon stem and loop of transfer RNAs.</text>
</comment>
<comment type="catalytic activity">
    <reaction evidence="1">
        <text>uridine(38/39/40) in tRNA = pseudouridine(38/39/40) in tRNA</text>
        <dbReference type="Rhea" id="RHEA:22376"/>
        <dbReference type="Rhea" id="RHEA-COMP:10085"/>
        <dbReference type="Rhea" id="RHEA-COMP:10087"/>
        <dbReference type="ChEBI" id="CHEBI:65314"/>
        <dbReference type="ChEBI" id="CHEBI:65315"/>
        <dbReference type="EC" id="5.4.99.12"/>
    </reaction>
</comment>
<comment type="subunit">
    <text evidence="1">Homodimer.</text>
</comment>
<comment type="similarity">
    <text evidence="1">Belongs to the tRNA pseudouridine synthase TruA family.</text>
</comment>
<keyword id="KW-0413">Isomerase</keyword>
<keyword id="KW-0819">tRNA processing</keyword>
<organism>
    <name type="scientific">Salmonella enteritidis PT4 (strain P125109)</name>
    <dbReference type="NCBI Taxonomy" id="550537"/>
    <lineage>
        <taxon>Bacteria</taxon>
        <taxon>Pseudomonadati</taxon>
        <taxon>Pseudomonadota</taxon>
        <taxon>Gammaproteobacteria</taxon>
        <taxon>Enterobacterales</taxon>
        <taxon>Enterobacteriaceae</taxon>
        <taxon>Salmonella</taxon>
    </lineage>
</organism>
<proteinExistence type="inferred from homology"/>